<evidence type="ECO:0000255" key="1">
    <source>
        <dbReference type="HAMAP-Rule" id="MF_01320"/>
    </source>
</evidence>
<evidence type="ECO:0000256" key="2">
    <source>
        <dbReference type="SAM" id="MobiDB-lite"/>
    </source>
</evidence>
<evidence type="ECO:0000305" key="3"/>
<organism>
    <name type="scientific">Salmonella typhi</name>
    <dbReference type="NCBI Taxonomy" id="90370"/>
    <lineage>
        <taxon>Bacteria</taxon>
        <taxon>Pseudomonadati</taxon>
        <taxon>Pseudomonadota</taxon>
        <taxon>Gammaproteobacteria</taxon>
        <taxon>Enterobacterales</taxon>
        <taxon>Enterobacteriaceae</taxon>
        <taxon>Salmonella</taxon>
    </lineage>
</organism>
<protein>
    <recommendedName>
        <fullName evidence="1">Large ribosomal subunit protein uL2</fullName>
    </recommendedName>
    <alternativeName>
        <fullName evidence="3">50S ribosomal protein L2</fullName>
    </alternativeName>
</protein>
<sequence>MAVVKCKPTSPGRRHVVKVVNPELHKGKPFAPLVEKNSKSGGRNNNGRITTRHIGGGHKQAYRIVDFKRNKDGIPAVVERLEYDPNRSANIALVLYKDGERRYILAPKGLKAGDQIQSGVDAAIKAGNTLPMRNIPVGSTVHNVEMKPGKGGQLARSAGTYVQIVARDGAYVTLRLRSGEMRKVEADCRATLGEVGNAEHMLRVLGKAGAARWRGVRPTVRGTAMNPVDHPHGGGEGRNFGKHPVTPWGVQTKGKKTRSNKRTDKFIVRRRSK</sequence>
<reference key="1">
    <citation type="journal article" date="2001" name="Nature">
        <title>Complete genome sequence of a multiple drug resistant Salmonella enterica serovar Typhi CT18.</title>
        <authorList>
            <person name="Parkhill J."/>
            <person name="Dougan G."/>
            <person name="James K.D."/>
            <person name="Thomson N.R."/>
            <person name="Pickard D."/>
            <person name="Wain J."/>
            <person name="Churcher C.M."/>
            <person name="Mungall K.L."/>
            <person name="Bentley S.D."/>
            <person name="Holden M.T.G."/>
            <person name="Sebaihia M."/>
            <person name="Baker S."/>
            <person name="Basham D."/>
            <person name="Brooks K."/>
            <person name="Chillingworth T."/>
            <person name="Connerton P."/>
            <person name="Cronin A."/>
            <person name="Davis P."/>
            <person name="Davies R.M."/>
            <person name="Dowd L."/>
            <person name="White N."/>
            <person name="Farrar J."/>
            <person name="Feltwell T."/>
            <person name="Hamlin N."/>
            <person name="Haque A."/>
            <person name="Hien T.T."/>
            <person name="Holroyd S."/>
            <person name="Jagels K."/>
            <person name="Krogh A."/>
            <person name="Larsen T.S."/>
            <person name="Leather S."/>
            <person name="Moule S."/>
            <person name="O'Gaora P."/>
            <person name="Parry C."/>
            <person name="Quail M.A."/>
            <person name="Rutherford K.M."/>
            <person name="Simmonds M."/>
            <person name="Skelton J."/>
            <person name="Stevens K."/>
            <person name="Whitehead S."/>
            <person name="Barrell B.G."/>
        </authorList>
    </citation>
    <scope>NUCLEOTIDE SEQUENCE [LARGE SCALE GENOMIC DNA]</scope>
    <source>
        <strain>CT18</strain>
    </source>
</reference>
<reference key="2">
    <citation type="journal article" date="2003" name="J. Bacteriol.">
        <title>Comparative genomics of Salmonella enterica serovar Typhi strains Ty2 and CT18.</title>
        <authorList>
            <person name="Deng W."/>
            <person name="Liou S.-R."/>
            <person name="Plunkett G. III"/>
            <person name="Mayhew G.F."/>
            <person name="Rose D.J."/>
            <person name="Burland V."/>
            <person name="Kodoyianni V."/>
            <person name="Schwartz D.C."/>
            <person name="Blattner F.R."/>
        </authorList>
    </citation>
    <scope>NUCLEOTIDE SEQUENCE [LARGE SCALE GENOMIC DNA]</scope>
    <source>
        <strain>ATCC 700931 / Ty2</strain>
    </source>
</reference>
<proteinExistence type="inferred from homology"/>
<dbReference type="EMBL" id="AL513382">
    <property type="protein sequence ID" value="CAD08176.1"/>
    <property type="molecule type" value="Genomic_DNA"/>
</dbReference>
<dbReference type="EMBL" id="AE014613">
    <property type="protein sequence ID" value="AAO71535.1"/>
    <property type="molecule type" value="Genomic_DNA"/>
</dbReference>
<dbReference type="RefSeq" id="NP_458463.1">
    <property type="nucleotide sequence ID" value="NC_003198.1"/>
</dbReference>
<dbReference type="RefSeq" id="WP_000301869.1">
    <property type="nucleotide sequence ID" value="NZ_WSUR01000046.1"/>
</dbReference>
<dbReference type="SMR" id="P60427"/>
<dbReference type="STRING" id="220341.gene:17588189"/>
<dbReference type="GeneID" id="97393170"/>
<dbReference type="KEGG" id="stt:t4068"/>
<dbReference type="KEGG" id="sty:STY4361"/>
<dbReference type="PATRIC" id="fig|220341.7.peg.4457"/>
<dbReference type="eggNOG" id="COG0090">
    <property type="taxonomic scope" value="Bacteria"/>
</dbReference>
<dbReference type="HOGENOM" id="CLU_036235_2_1_6"/>
<dbReference type="OMA" id="GGRHPCT"/>
<dbReference type="OrthoDB" id="9778722at2"/>
<dbReference type="Proteomes" id="UP000000541">
    <property type="component" value="Chromosome"/>
</dbReference>
<dbReference type="Proteomes" id="UP000002670">
    <property type="component" value="Chromosome"/>
</dbReference>
<dbReference type="GO" id="GO:0005829">
    <property type="term" value="C:cytosol"/>
    <property type="evidence" value="ECO:0007669"/>
    <property type="project" value="UniProtKB-ARBA"/>
</dbReference>
<dbReference type="GO" id="GO:0015934">
    <property type="term" value="C:large ribosomal subunit"/>
    <property type="evidence" value="ECO:0007669"/>
    <property type="project" value="InterPro"/>
</dbReference>
<dbReference type="GO" id="GO:0019843">
    <property type="term" value="F:rRNA binding"/>
    <property type="evidence" value="ECO:0007669"/>
    <property type="project" value="UniProtKB-UniRule"/>
</dbReference>
<dbReference type="GO" id="GO:0003735">
    <property type="term" value="F:structural constituent of ribosome"/>
    <property type="evidence" value="ECO:0007669"/>
    <property type="project" value="InterPro"/>
</dbReference>
<dbReference type="GO" id="GO:0016740">
    <property type="term" value="F:transferase activity"/>
    <property type="evidence" value="ECO:0007669"/>
    <property type="project" value="InterPro"/>
</dbReference>
<dbReference type="GO" id="GO:0002181">
    <property type="term" value="P:cytoplasmic translation"/>
    <property type="evidence" value="ECO:0007669"/>
    <property type="project" value="TreeGrafter"/>
</dbReference>
<dbReference type="FunFam" id="2.30.30.30:FF:000001">
    <property type="entry name" value="50S ribosomal protein L2"/>
    <property type="match status" value="1"/>
</dbReference>
<dbReference type="FunFam" id="2.40.50.140:FF:000003">
    <property type="entry name" value="50S ribosomal protein L2"/>
    <property type="match status" value="1"/>
</dbReference>
<dbReference type="FunFam" id="4.10.950.10:FF:000001">
    <property type="entry name" value="50S ribosomal protein L2"/>
    <property type="match status" value="1"/>
</dbReference>
<dbReference type="Gene3D" id="2.30.30.30">
    <property type="match status" value="1"/>
</dbReference>
<dbReference type="Gene3D" id="2.40.50.140">
    <property type="entry name" value="Nucleic acid-binding proteins"/>
    <property type="match status" value="1"/>
</dbReference>
<dbReference type="Gene3D" id="4.10.950.10">
    <property type="entry name" value="Ribosomal protein L2, domain 3"/>
    <property type="match status" value="1"/>
</dbReference>
<dbReference type="HAMAP" id="MF_01320_B">
    <property type="entry name" value="Ribosomal_uL2_B"/>
    <property type="match status" value="1"/>
</dbReference>
<dbReference type="InterPro" id="IPR012340">
    <property type="entry name" value="NA-bd_OB-fold"/>
</dbReference>
<dbReference type="InterPro" id="IPR014722">
    <property type="entry name" value="Rib_uL2_dom2"/>
</dbReference>
<dbReference type="InterPro" id="IPR002171">
    <property type="entry name" value="Ribosomal_uL2"/>
</dbReference>
<dbReference type="InterPro" id="IPR005880">
    <property type="entry name" value="Ribosomal_uL2_bac/org-type"/>
</dbReference>
<dbReference type="InterPro" id="IPR022669">
    <property type="entry name" value="Ribosomal_uL2_C"/>
</dbReference>
<dbReference type="InterPro" id="IPR022671">
    <property type="entry name" value="Ribosomal_uL2_CS"/>
</dbReference>
<dbReference type="InterPro" id="IPR014726">
    <property type="entry name" value="Ribosomal_uL2_dom3"/>
</dbReference>
<dbReference type="InterPro" id="IPR022666">
    <property type="entry name" value="Ribosomal_uL2_RNA-bd_dom"/>
</dbReference>
<dbReference type="InterPro" id="IPR008991">
    <property type="entry name" value="Translation_prot_SH3-like_sf"/>
</dbReference>
<dbReference type="NCBIfam" id="TIGR01171">
    <property type="entry name" value="rplB_bact"/>
    <property type="match status" value="1"/>
</dbReference>
<dbReference type="PANTHER" id="PTHR13691:SF5">
    <property type="entry name" value="LARGE RIBOSOMAL SUBUNIT PROTEIN UL2M"/>
    <property type="match status" value="1"/>
</dbReference>
<dbReference type="PANTHER" id="PTHR13691">
    <property type="entry name" value="RIBOSOMAL PROTEIN L2"/>
    <property type="match status" value="1"/>
</dbReference>
<dbReference type="Pfam" id="PF00181">
    <property type="entry name" value="Ribosomal_L2"/>
    <property type="match status" value="1"/>
</dbReference>
<dbReference type="Pfam" id="PF03947">
    <property type="entry name" value="Ribosomal_L2_C"/>
    <property type="match status" value="1"/>
</dbReference>
<dbReference type="PIRSF" id="PIRSF002158">
    <property type="entry name" value="Ribosomal_L2"/>
    <property type="match status" value="1"/>
</dbReference>
<dbReference type="SMART" id="SM01383">
    <property type="entry name" value="Ribosomal_L2"/>
    <property type="match status" value="1"/>
</dbReference>
<dbReference type="SMART" id="SM01382">
    <property type="entry name" value="Ribosomal_L2_C"/>
    <property type="match status" value="1"/>
</dbReference>
<dbReference type="SUPFAM" id="SSF50249">
    <property type="entry name" value="Nucleic acid-binding proteins"/>
    <property type="match status" value="1"/>
</dbReference>
<dbReference type="SUPFAM" id="SSF50104">
    <property type="entry name" value="Translation proteins SH3-like domain"/>
    <property type="match status" value="1"/>
</dbReference>
<dbReference type="PROSITE" id="PS00467">
    <property type="entry name" value="RIBOSOMAL_L2"/>
    <property type="match status" value="1"/>
</dbReference>
<comment type="function">
    <text evidence="1">One of the primary rRNA binding proteins. Required for association of the 30S and 50S subunits to form the 70S ribosome, for tRNA binding and peptide bond formation. It has been suggested to have peptidyltransferase activity; this is somewhat controversial. Makes several contacts with the 16S rRNA in the 70S ribosome.</text>
</comment>
<comment type="subunit">
    <text evidence="1">Part of the 50S ribosomal subunit. Forms a bridge to the 30S subunit in the 70S ribosome.</text>
</comment>
<comment type="similarity">
    <text evidence="1">Belongs to the universal ribosomal protein uL2 family.</text>
</comment>
<feature type="chain" id="PRO_0000129609" description="Large ribosomal subunit protein uL2">
    <location>
        <begin position="1"/>
        <end position="273"/>
    </location>
</feature>
<feature type="region of interest" description="Disordered" evidence="2">
    <location>
        <begin position="28"/>
        <end position="53"/>
    </location>
</feature>
<feature type="region of interest" description="Disordered" evidence="2">
    <location>
        <begin position="221"/>
        <end position="273"/>
    </location>
</feature>
<feature type="compositionally biased region" description="Low complexity" evidence="2">
    <location>
        <begin position="39"/>
        <end position="48"/>
    </location>
</feature>
<gene>
    <name evidence="1" type="primary">rplB</name>
    <name type="ordered locus">STY4361</name>
    <name type="ordered locus">t4068</name>
</gene>
<accession>P60427</accession>
<accession>Q8XFX1</accession>
<keyword id="KW-0687">Ribonucleoprotein</keyword>
<keyword id="KW-0689">Ribosomal protein</keyword>
<keyword id="KW-0694">RNA-binding</keyword>
<keyword id="KW-0699">rRNA-binding</keyword>
<name>RL2_SALTI</name>